<reference key="1">
    <citation type="journal article" date="2002" name="Nature">
        <title>Sequence and analysis of rice chromosome 4.</title>
        <authorList>
            <person name="Feng Q."/>
            <person name="Zhang Y."/>
            <person name="Hao P."/>
            <person name="Wang S."/>
            <person name="Fu G."/>
            <person name="Huang Y."/>
            <person name="Li Y."/>
            <person name="Zhu J."/>
            <person name="Liu Y."/>
            <person name="Hu X."/>
            <person name="Jia P."/>
            <person name="Zhang Y."/>
            <person name="Zhao Q."/>
            <person name="Ying K."/>
            <person name="Yu S."/>
            <person name="Tang Y."/>
            <person name="Weng Q."/>
            <person name="Zhang L."/>
            <person name="Lu Y."/>
            <person name="Mu J."/>
            <person name="Lu Y."/>
            <person name="Zhang L.S."/>
            <person name="Yu Z."/>
            <person name="Fan D."/>
            <person name="Liu X."/>
            <person name="Lu T."/>
            <person name="Li C."/>
            <person name="Wu Y."/>
            <person name="Sun T."/>
            <person name="Lei H."/>
            <person name="Li T."/>
            <person name="Hu H."/>
            <person name="Guan J."/>
            <person name="Wu M."/>
            <person name="Zhang R."/>
            <person name="Zhou B."/>
            <person name="Chen Z."/>
            <person name="Chen L."/>
            <person name="Jin Z."/>
            <person name="Wang R."/>
            <person name="Yin H."/>
            <person name="Cai Z."/>
            <person name="Ren S."/>
            <person name="Lv G."/>
            <person name="Gu W."/>
            <person name="Zhu G."/>
            <person name="Tu Y."/>
            <person name="Jia J."/>
            <person name="Zhang Y."/>
            <person name="Chen J."/>
            <person name="Kang H."/>
            <person name="Chen X."/>
            <person name="Shao C."/>
            <person name="Sun Y."/>
            <person name="Hu Q."/>
            <person name="Zhang X."/>
            <person name="Zhang W."/>
            <person name="Wang L."/>
            <person name="Ding C."/>
            <person name="Sheng H."/>
            <person name="Gu J."/>
            <person name="Chen S."/>
            <person name="Ni L."/>
            <person name="Zhu F."/>
            <person name="Chen W."/>
            <person name="Lan L."/>
            <person name="Lai Y."/>
            <person name="Cheng Z."/>
            <person name="Gu M."/>
            <person name="Jiang J."/>
            <person name="Li J."/>
            <person name="Hong G."/>
            <person name="Xue Y."/>
            <person name="Han B."/>
        </authorList>
    </citation>
    <scope>NUCLEOTIDE SEQUENCE [LARGE SCALE GENOMIC DNA]</scope>
    <source>
        <strain>cv. Nipponbare</strain>
    </source>
</reference>
<reference key="2">
    <citation type="journal article" date="2005" name="Nature">
        <title>The map-based sequence of the rice genome.</title>
        <authorList>
            <consortium name="International rice genome sequencing project (IRGSP)"/>
        </authorList>
    </citation>
    <scope>NUCLEOTIDE SEQUENCE [LARGE SCALE GENOMIC DNA]</scope>
    <source>
        <strain>cv. Nipponbare</strain>
    </source>
</reference>
<reference key="3">
    <citation type="journal article" date="2013" name="Rice">
        <title>Improvement of the Oryza sativa Nipponbare reference genome using next generation sequence and optical map data.</title>
        <authorList>
            <person name="Kawahara Y."/>
            <person name="de la Bastide M."/>
            <person name="Hamilton J.P."/>
            <person name="Kanamori H."/>
            <person name="McCombie W.R."/>
            <person name="Ouyang S."/>
            <person name="Schwartz D.C."/>
            <person name="Tanaka T."/>
            <person name="Wu J."/>
            <person name="Zhou S."/>
            <person name="Childs K.L."/>
            <person name="Davidson R.M."/>
            <person name="Lin H."/>
            <person name="Quesada-Ocampo L."/>
            <person name="Vaillancourt B."/>
            <person name="Sakai H."/>
            <person name="Lee S.S."/>
            <person name="Kim J."/>
            <person name="Numa H."/>
            <person name="Itoh T."/>
            <person name="Buell C.R."/>
            <person name="Matsumoto T."/>
        </authorList>
    </citation>
    <scope>GENOME REANNOTATION</scope>
    <source>
        <strain>cv. Nipponbare</strain>
    </source>
</reference>
<reference key="4">
    <citation type="journal article" date="2003" name="Science">
        <title>Collection, mapping, and annotation of over 28,000 cDNA clones from japonica rice.</title>
        <authorList>
            <consortium name="The rice full-length cDNA consortium"/>
        </authorList>
    </citation>
    <scope>NUCLEOTIDE SEQUENCE [LARGE SCALE MRNA]</scope>
    <source>
        <strain>cv. Nipponbare</strain>
    </source>
</reference>
<name>ILVB2_ORYSJ</name>
<evidence type="ECO:0000250" key="1"/>
<evidence type="ECO:0000255" key="2"/>
<evidence type="ECO:0000256" key="3">
    <source>
        <dbReference type="SAM" id="MobiDB-lite"/>
    </source>
</evidence>
<evidence type="ECO:0000305" key="4"/>
<sequence length="663" mass="71176">MAAAAAAASLSVSDAAAKLPKPGGQVQRRRDRDRPRVDAAACTRDSRRPTRERCSTTVSLAATATATTATPVRAPVRTRAPMGQRKGADIVVEALERCGVRDVFEYPGGASMEIHQALTRSPVIRNHLLRHEQGEAFAASGYARSSGRPGVCVATSGPGATNLVSALADAHLDSVPLVAITGQAPRRMIGTDAFQETPIVEFTRSITKHNYLILDVDDIPRVINEAFFLASTGRPGPVLVDIPKDIQQQMAVPSWDAPMRLPGYISRLPKPPAANLLDEVIRLVGDAERPVLYVGGGCSASGYELRRFVELTGIPVTTTLMGIGNFPSDDPLSLRMLGMHGTVYANYAVDNADLLLALGVRFDDRVTGKVEAFASRAKIVHVDIDPSELGKNKQPHVSICADVKLALQGMNAMLEEQSAAAARKNLDFSAWRSELEKKKVEFPLGYRTFGEEIPPQYAIQVLDEVTNGEAIVATGVGQHQMWATQHYTYRRPRQWLSSAGLGAMGFGLPAAAGAAVANPGATVVDIDGDGSLLMNIQELAMVRVEDLPVKVMVLNNQHLGMVVQWEDRFYDANRAHTYLGNPAANGGGEVYPDFVTIAGGFGIPAARVTRKGEVRAAVEEMMAAPGPYLLDVVVPHQEHVLPMIPSNGAFKDIIVDGDGRSSY</sequence>
<organism>
    <name type="scientific">Oryza sativa subsp. japonica</name>
    <name type="common">Rice</name>
    <dbReference type="NCBI Taxonomy" id="39947"/>
    <lineage>
        <taxon>Eukaryota</taxon>
        <taxon>Viridiplantae</taxon>
        <taxon>Streptophyta</taxon>
        <taxon>Embryophyta</taxon>
        <taxon>Tracheophyta</taxon>
        <taxon>Spermatophyta</taxon>
        <taxon>Magnoliopsida</taxon>
        <taxon>Liliopsida</taxon>
        <taxon>Poales</taxon>
        <taxon>Poaceae</taxon>
        <taxon>BOP clade</taxon>
        <taxon>Oryzoideae</taxon>
        <taxon>Oryzeae</taxon>
        <taxon>Oryzinae</taxon>
        <taxon>Oryza</taxon>
        <taxon>Oryza sativa</taxon>
    </lineage>
</organism>
<accession>Q7XKQ8</accession>
<accession>A0A0P0W9Z1</accession>
<proteinExistence type="evidence at transcript level"/>
<comment type="catalytic activity">
    <reaction>
        <text>2 pyruvate + H(+) = (2S)-2-acetolactate + CO2</text>
        <dbReference type="Rhea" id="RHEA:25249"/>
        <dbReference type="ChEBI" id="CHEBI:15361"/>
        <dbReference type="ChEBI" id="CHEBI:15378"/>
        <dbReference type="ChEBI" id="CHEBI:16526"/>
        <dbReference type="ChEBI" id="CHEBI:58476"/>
        <dbReference type="EC" id="2.2.1.6"/>
    </reaction>
</comment>
<comment type="cofactor">
    <cofactor evidence="1">
        <name>Mg(2+)</name>
        <dbReference type="ChEBI" id="CHEBI:18420"/>
    </cofactor>
    <text evidence="1">Binds 1 Mg(2+) ion per subunit.</text>
</comment>
<comment type="cofactor">
    <cofactor evidence="1">
        <name>thiamine diphosphate</name>
        <dbReference type="ChEBI" id="CHEBI:58937"/>
    </cofactor>
    <text evidence="1">Binds 1 thiamine pyrophosphate per subunit.</text>
</comment>
<comment type="pathway">
    <text>Amino-acid biosynthesis; L-isoleucine biosynthesis; L-isoleucine from 2-oxobutanoate: step 1/4.</text>
</comment>
<comment type="pathway">
    <text>Amino-acid biosynthesis; L-valine biosynthesis; L-valine from pyruvate: step 1/4.</text>
</comment>
<comment type="subcellular location">
    <subcellularLocation>
        <location evidence="1">Plastid</location>
        <location evidence="1">Chloroplast</location>
    </subcellularLocation>
</comment>
<comment type="miscellaneous">
    <text>Acetolactate synthase is the target enzyme for sulfonylurea and imidazolinone herbicides.</text>
</comment>
<comment type="similarity">
    <text evidence="4">Belongs to the TPP enzyme family.</text>
</comment>
<gene>
    <name type="primary">ALS2</name>
    <name type="ordered locus">Os04g0389800</name>
    <name type="ordered locus">LOC_Os04g32010</name>
    <name type="ORF">OSJNBa0053B21.13</name>
</gene>
<dbReference type="EC" id="2.2.1.6"/>
<dbReference type="EMBL" id="AL731599">
    <property type="protein sequence ID" value="CAE05539.2"/>
    <property type="molecule type" value="Genomic_DNA"/>
</dbReference>
<dbReference type="EMBL" id="AP014960">
    <property type="protein sequence ID" value="BAS88952.1"/>
    <property type="molecule type" value="Genomic_DNA"/>
</dbReference>
<dbReference type="EMBL" id="AK109628">
    <property type="status" value="NOT_ANNOTATED_CDS"/>
    <property type="molecule type" value="mRNA"/>
</dbReference>
<dbReference type="RefSeq" id="XP_015634624.1">
    <property type="nucleotide sequence ID" value="XM_015779138.1"/>
</dbReference>
<dbReference type="SMR" id="Q7XKQ8"/>
<dbReference type="FunCoup" id="Q7XKQ8">
    <property type="interactions" value="1066"/>
</dbReference>
<dbReference type="STRING" id="39947.Q7XKQ8"/>
<dbReference type="PaxDb" id="39947-Q7XKQ8"/>
<dbReference type="EnsemblPlants" id="Os04t0389800-01">
    <property type="protein sequence ID" value="Os04t0389800-01"/>
    <property type="gene ID" value="Os04g0389800"/>
</dbReference>
<dbReference type="Gramene" id="Os04t0389800-01">
    <property type="protein sequence ID" value="Os04t0389800-01"/>
    <property type="gene ID" value="Os04g0389800"/>
</dbReference>
<dbReference type="eggNOG" id="KOG4166">
    <property type="taxonomic scope" value="Eukaryota"/>
</dbReference>
<dbReference type="HOGENOM" id="CLU_013748_1_3_1"/>
<dbReference type="InParanoid" id="Q7XKQ8"/>
<dbReference type="OMA" id="WREPRSF"/>
<dbReference type="OrthoDB" id="16262at2759"/>
<dbReference type="PlantReactome" id="R-OSA-1119460">
    <property type="pathway name" value="Isoleucine biosynthesis from threonine"/>
</dbReference>
<dbReference type="PlantReactome" id="R-OSA-1119600">
    <property type="pathway name" value="Valine biosynthesis"/>
</dbReference>
<dbReference type="UniPathway" id="UPA00047">
    <property type="reaction ID" value="UER00055"/>
</dbReference>
<dbReference type="UniPathway" id="UPA00049">
    <property type="reaction ID" value="UER00059"/>
</dbReference>
<dbReference type="Proteomes" id="UP000000763">
    <property type="component" value="Chromosome 4"/>
</dbReference>
<dbReference type="Proteomes" id="UP000059680">
    <property type="component" value="Chromosome 4"/>
</dbReference>
<dbReference type="GO" id="GO:0005948">
    <property type="term" value="C:acetolactate synthase complex"/>
    <property type="evidence" value="ECO:0000318"/>
    <property type="project" value="GO_Central"/>
</dbReference>
<dbReference type="GO" id="GO:0009507">
    <property type="term" value="C:chloroplast"/>
    <property type="evidence" value="ECO:0007669"/>
    <property type="project" value="UniProtKB-SubCell"/>
</dbReference>
<dbReference type="GO" id="GO:0003984">
    <property type="term" value="F:acetolactate synthase activity"/>
    <property type="evidence" value="ECO:0000318"/>
    <property type="project" value="GO_Central"/>
</dbReference>
<dbReference type="GO" id="GO:0050660">
    <property type="term" value="F:flavin adenine dinucleotide binding"/>
    <property type="evidence" value="ECO:0000318"/>
    <property type="project" value="GO_Central"/>
</dbReference>
<dbReference type="GO" id="GO:0000287">
    <property type="term" value="F:magnesium ion binding"/>
    <property type="evidence" value="ECO:0007669"/>
    <property type="project" value="InterPro"/>
</dbReference>
<dbReference type="GO" id="GO:0030976">
    <property type="term" value="F:thiamine pyrophosphate binding"/>
    <property type="evidence" value="ECO:0007669"/>
    <property type="project" value="InterPro"/>
</dbReference>
<dbReference type="GO" id="GO:0009097">
    <property type="term" value="P:isoleucine biosynthetic process"/>
    <property type="evidence" value="ECO:0000318"/>
    <property type="project" value="GO_Central"/>
</dbReference>
<dbReference type="GO" id="GO:0009099">
    <property type="term" value="P:L-valine biosynthetic process"/>
    <property type="evidence" value="ECO:0000318"/>
    <property type="project" value="GO_Central"/>
</dbReference>
<dbReference type="GO" id="GO:0009635">
    <property type="term" value="P:response to herbicide"/>
    <property type="evidence" value="ECO:0007669"/>
    <property type="project" value="UniProtKB-KW"/>
</dbReference>
<dbReference type="CDD" id="cd02015">
    <property type="entry name" value="TPP_AHAS"/>
    <property type="match status" value="1"/>
</dbReference>
<dbReference type="CDD" id="cd07035">
    <property type="entry name" value="TPP_PYR_POX_like"/>
    <property type="match status" value="1"/>
</dbReference>
<dbReference type="FunFam" id="3.40.50.1220:FF:000008">
    <property type="entry name" value="Acetolactate synthase"/>
    <property type="match status" value="1"/>
</dbReference>
<dbReference type="FunFam" id="3.40.50.970:FF:000007">
    <property type="entry name" value="Acetolactate synthase"/>
    <property type="match status" value="1"/>
</dbReference>
<dbReference type="Gene3D" id="3.40.50.970">
    <property type="match status" value="2"/>
</dbReference>
<dbReference type="Gene3D" id="3.40.50.1220">
    <property type="entry name" value="TPP-binding domain"/>
    <property type="match status" value="1"/>
</dbReference>
<dbReference type="InterPro" id="IPR012846">
    <property type="entry name" value="Acetolactate_synth_lsu"/>
</dbReference>
<dbReference type="InterPro" id="IPR039368">
    <property type="entry name" value="AHAS_TPP"/>
</dbReference>
<dbReference type="InterPro" id="IPR029035">
    <property type="entry name" value="DHS-like_NAD/FAD-binding_dom"/>
</dbReference>
<dbReference type="InterPro" id="IPR029061">
    <property type="entry name" value="THDP-binding"/>
</dbReference>
<dbReference type="InterPro" id="IPR012000">
    <property type="entry name" value="Thiamin_PyroP_enz_cen_dom"/>
</dbReference>
<dbReference type="InterPro" id="IPR012001">
    <property type="entry name" value="Thiamin_PyroP_enz_TPP-bd_dom"/>
</dbReference>
<dbReference type="InterPro" id="IPR045229">
    <property type="entry name" value="TPP_enz"/>
</dbReference>
<dbReference type="InterPro" id="IPR011766">
    <property type="entry name" value="TPP_enzyme_TPP-bd"/>
</dbReference>
<dbReference type="NCBIfam" id="TIGR00118">
    <property type="entry name" value="acolac_lg"/>
    <property type="match status" value="1"/>
</dbReference>
<dbReference type="PANTHER" id="PTHR18968:SF13">
    <property type="entry name" value="ACETOLACTATE SYNTHASE CATALYTIC SUBUNIT, MITOCHONDRIAL"/>
    <property type="match status" value="1"/>
</dbReference>
<dbReference type="PANTHER" id="PTHR18968">
    <property type="entry name" value="THIAMINE PYROPHOSPHATE ENZYMES"/>
    <property type="match status" value="1"/>
</dbReference>
<dbReference type="Pfam" id="PF02775">
    <property type="entry name" value="TPP_enzyme_C"/>
    <property type="match status" value="1"/>
</dbReference>
<dbReference type="Pfam" id="PF00205">
    <property type="entry name" value="TPP_enzyme_M"/>
    <property type="match status" value="1"/>
</dbReference>
<dbReference type="Pfam" id="PF02776">
    <property type="entry name" value="TPP_enzyme_N"/>
    <property type="match status" value="1"/>
</dbReference>
<dbReference type="SUPFAM" id="SSF52467">
    <property type="entry name" value="DHS-like NAD/FAD-binding domain"/>
    <property type="match status" value="1"/>
</dbReference>
<dbReference type="SUPFAM" id="SSF52518">
    <property type="entry name" value="Thiamin diphosphate-binding fold (THDP-binding)"/>
    <property type="match status" value="2"/>
</dbReference>
<feature type="transit peptide" description="Chloroplast" evidence="2">
    <location>
        <begin position="1"/>
        <end position="79"/>
    </location>
</feature>
<feature type="chain" id="PRO_0000235810" description="Probable acetolactate synthase 2, chloroplastic">
    <location>
        <begin position="80"/>
        <end position="663"/>
    </location>
</feature>
<feature type="region of interest" description="Disordered" evidence="3">
    <location>
        <begin position="1"/>
        <end position="56"/>
    </location>
</feature>
<feature type="region of interest" description="Thiamine pyrophosphate binding" evidence="1">
    <location>
        <begin position="478"/>
        <end position="558"/>
    </location>
</feature>
<feature type="compositionally biased region" description="Low complexity" evidence="3">
    <location>
        <begin position="1"/>
        <end position="26"/>
    </location>
</feature>
<feature type="compositionally biased region" description="Basic and acidic residues" evidence="3">
    <location>
        <begin position="28"/>
        <end position="37"/>
    </location>
</feature>
<feature type="compositionally biased region" description="Basic and acidic residues" evidence="3">
    <location>
        <begin position="44"/>
        <end position="54"/>
    </location>
</feature>
<feature type="binding site" evidence="1">
    <location>
        <position position="132"/>
    </location>
    <ligand>
        <name>thiamine diphosphate</name>
        <dbReference type="ChEBI" id="CHEBI:58937"/>
    </ligand>
</feature>
<feature type="binding site" evidence="1">
    <location>
        <position position="234"/>
    </location>
    <ligand>
        <name>FAD</name>
        <dbReference type="ChEBI" id="CHEBI:57692"/>
    </ligand>
</feature>
<feature type="binding site" evidence="1">
    <location>
        <begin position="340"/>
        <end position="361"/>
    </location>
    <ligand>
        <name>FAD</name>
        <dbReference type="ChEBI" id="CHEBI:57692"/>
    </ligand>
</feature>
<feature type="binding site" evidence="1">
    <location>
        <begin position="383"/>
        <end position="402"/>
    </location>
    <ligand>
        <name>FAD</name>
        <dbReference type="ChEBI" id="CHEBI:57692"/>
    </ligand>
</feature>
<feature type="binding site" evidence="1">
    <location>
        <position position="529"/>
    </location>
    <ligand>
        <name>Mg(2+)</name>
        <dbReference type="ChEBI" id="CHEBI:18420"/>
    </ligand>
</feature>
<feature type="binding site" evidence="1">
    <location>
        <position position="556"/>
    </location>
    <ligand>
        <name>Mg(2+)</name>
        <dbReference type="ChEBI" id="CHEBI:18420"/>
    </ligand>
</feature>
<feature type="disulfide bond" evidence="1">
    <location>
        <begin position="152"/>
        <end position="298"/>
    </location>
</feature>
<protein>
    <recommendedName>
        <fullName>Probable acetolactate synthase 2, chloroplastic</fullName>
        <ecNumber>2.2.1.6</ecNumber>
    </recommendedName>
    <alternativeName>
        <fullName>Acetohydroxy-acid synthase 2</fullName>
    </alternativeName>
</protein>
<keyword id="KW-0028">Amino-acid biosynthesis</keyword>
<keyword id="KW-0100">Branched-chain amino acid biosynthesis</keyword>
<keyword id="KW-0150">Chloroplast</keyword>
<keyword id="KW-1015">Disulfide bond</keyword>
<keyword id="KW-0274">FAD</keyword>
<keyword id="KW-0285">Flavoprotein</keyword>
<keyword id="KW-0359">Herbicide resistance</keyword>
<keyword id="KW-0460">Magnesium</keyword>
<keyword id="KW-0479">Metal-binding</keyword>
<keyword id="KW-0934">Plastid</keyword>
<keyword id="KW-1185">Reference proteome</keyword>
<keyword id="KW-0786">Thiamine pyrophosphate</keyword>
<keyword id="KW-0808">Transferase</keyword>
<keyword id="KW-0809">Transit peptide</keyword>